<proteinExistence type="evidence at transcript level"/>
<evidence type="ECO:0000255" key="1"/>
<evidence type="ECO:0000256" key="2">
    <source>
        <dbReference type="SAM" id="MobiDB-lite"/>
    </source>
</evidence>
<evidence type="ECO:0000305" key="3"/>
<sequence length="281" mass="31743">MFTIQKPDTVSHLSHFHESKSLGSLPFPSDKERKQDTNFNILEETYDKNENWSQDKKGGEEGENKSKSEDEHSSLDNNRSQLKNRPIGQLKSTGSEGISLSSSEEEVRSPPEGAEIMQLEGDTPANDTANGFEKWAGSPLEDNGYASSSLSIDSPDSVSASTWQETTLPAPTTTPQENPETEDSDVESSSDSDSISVTLSEAFQSLQDKEKLKEREKEKHHAQLTMYRRLALLRWIRALQQKVRDQQNRLQESFDTILDNRKEMLRHMQHGYNKTPTKEAV</sequence>
<reference key="1">
    <citation type="submission" date="2007-03" db="EMBL/GenBank/DDBJ databases">
        <authorList>
            <consortium name="NIH - Xenopus Gene Collection (XGC) project"/>
        </authorList>
    </citation>
    <scope>NUCLEOTIDE SEQUENCE [LARGE SCALE MRNA]</scope>
    <source>
        <tissue>Embryo</tissue>
    </source>
</reference>
<feature type="chain" id="PRO_0000309181" description="UPF0500 protein C1orf216 homolog">
    <location>
        <begin position="1"/>
        <end position="281"/>
    </location>
</feature>
<feature type="region of interest" description="Disordered" evidence="2">
    <location>
        <begin position="1"/>
        <end position="197"/>
    </location>
</feature>
<feature type="coiled-coil region" evidence="1">
    <location>
        <begin position="198"/>
        <end position="257"/>
    </location>
</feature>
<feature type="compositionally biased region" description="Polar residues" evidence="2">
    <location>
        <begin position="1"/>
        <end position="12"/>
    </location>
</feature>
<feature type="compositionally biased region" description="Basic and acidic residues" evidence="2">
    <location>
        <begin position="45"/>
        <end position="74"/>
    </location>
</feature>
<feature type="compositionally biased region" description="Low complexity" evidence="2">
    <location>
        <begin position="92"/>
        <end position="102"/>
    </location>
</feature>
<feature type="compositionally biased region" description="Low complexity" evidence="2">
    <location>
        <begin position="147"/>
        <end position="161"/>
    </location>
</feature>
<feature type="compositionally biased region" description="Low complexity" evidence="2">
    <location>
        <begin position="169"/>
        <end position="178"/>
    </location>
</feature>
<feature type="compositionally biased region" description="Acidic residues" evidence="2">
    <location>
        <begin position="179"/>
        <end position="190"/>
    </location>
</feature>
<dbReference type="EMBL" id="BC135428">
    <property type="protein sequence ID" value="AAI35429.1"/>
    <property type="status" value="ALT_INIT"/>
    <property type="molecule type" value="mRNA"/>
</dbReference>
<dbReference type="SMR" id="A4IH95"/>
<dbReference type="FunCoup" id="A4IH95">
    <property type="interactions" value="34"/>
</dbReference>
<dbReference type="PaxDb" id="8364-ENSXETP00000021279"/>
<dbReference type="eggNOG" id="ENOG502S1PX">
    <property type="taxonomic scope" value="Eukaryota"/>
</dbReference>
<dbReference type="InParanoid" id="A4IH95"/>
<dbReference type="Proteomes" id="UP000008143">
    <property type="component" value="Unplaced"/>
</dbReference>
<dbReference type="InterPro" id="IPR027812">
    <property type="entry name" value="DUF4653"/>
</dbReference>
<dbReference type="PANTHER" id="PTHR35673">
    <property type="entry name" value="UPF0500 PROTEIN C1ORF216"/>
    <property type="match status" value="1"/>
</dbReference>
<dbReference type="PANTHER" id="PTHR35673:SF1">
    <property type="entry name" value="UPF0500 PROTEIN C1ORF216"/>
    <property type="match status" value="1"/>
</dbReference>
<dbReference type="Pfam" id="PF15546">
    <property type="entry name" value="DUF4653"/>
    <property type="match status" value="1"/>
</dbReference>
<comment type="similarity">
    <text evidence="3">Belongs to the UPF0500 family.</text>
</comment>
<comment type="sequence caution" evidence="3">
    <conflict type="erroneous initiation">
        <sequence resource="EMBL-CDS" id="AAI35429"/>
    </conflict>
</comment>
<keyword id="KW-0175">Coiled coil</keyword>
<keyword id="KW-1185">Reference proteome</keyword>
<protein>
    <recommendedName>
        <fullName>UPF0500 protein C1orf216 homolog</fullName>
    </recommendedName>
</protein>
<name>CA216_XENTR</name>
<accession>A4IH95</accession>
<organism>
    <name type="scientific">Xenopus tropicalis</name>
    <name type="common">Western clawed frog</name>
    <name type="synonym">Silurana tropicalis</name>
    <dbReference type="NCBI Taxonomy" id="8364"/>
    <lineage>
        <taxon>Eukaryota</taxon>
        <taxon>Metazoa</taxon>
        <taxon>Chordata</taxon>
        <taxon>Craniata</taxon>
        <taxon>Vertebrata</taxon>
        <taxon>Euteleostomi</taxon>
        <taxon>Amphibia</taxon>
        <taxon>Batrachia</taxon>
        <taxon>Anura</taxon>
        <taxon>Pipoidea</taxon>
        <taxon>Pipidae</taxon>
        <taxon>Xenopodinae</taxon>
        <taxon>Xenopus</taxon>
        <taxon>Silurana</taxon>
    </lineage>
</organism>